<name>RP6L3_ARATH</name>
<organism>
    <name type="scientific">Arabidopsis thaliana</name>
    <name type="common">Mouse-ear cress</name>
    <dbReference type="NCBI Taxonomy" id="3702"/>
    <lineage>
        <taxon>Eukaryota</taxon>
        <taxon>Viridiplantae</taxon>
        <taxon>Streptophyta</taxon>
        <taxon>Embryophyta</taxon>
        <taxon>Tracheophyta</taxon>
        <taxon>Spermatophyta</taxon>
        <taxon>Magnoliopsida</taxon>
        <taxon>eudicotyledons</taxon>
        <taxon>Gunneridae</taxon>
        <taxon>Pentapetalae</taxon>
        <taxon>rosids</taxon>
        <taxon>malvids</taxon>
        <taxon>Brassicales</taxon>
        <taxon>Brassicaceae</taxon>
        <taxon>Camelineae</taxon>
        <taxon>Arabidopsis</taxon>
    </lineage>
</organism>
<sequence>MELKEKAKVVITVASLVAVTILFVTEYRRRRQRRKQTSSLSSCYLHSELKPQFGFKRVLADNSYSEFKHLKLVDASSSSLEKPSNGHPYETEITVLLENPQIEFGFLRGECSLEMSDSYVWVETESQLKELAEILAKEQVFAVDTEQHSLRSFLGFTALIQISTHEEDFLVDTIALHDVMSILRPVFSDPNICKVFHGADNDVIWLQRDFHIYVVNMFDTAKACEVLSKPQRSLAYLLETVCGVATNKLLQREDWRQRPLSEEMVRYARTDAHYLLYIADSLTTELKQLATEDSSSPDDRFHFLLEASRRSNMTCLQLYTKETEDFPGSAASSSIIYRHLNGHGDKSNISLNAEELVRKLCAWRDLMGRIHDESTRYVLSDQAIVGLSCKQPTTTEEIYDTIAHIDLATESSPSLSSSVQSPYPVICSHLDDIYKMILDKLAKLDDLLPVVLKKCLGTNGTCPISVFNYSLLVNFKTKLSSHSAPKQNGHKNFKQQFTRKASRELFVKKFSCKAPVYHNCRIYANDGRLLCYCDKRKLEWYLNRGLAKLVEENPPAIMLLFEPKGRPEDEGNDFYIQTKRNICVGCGEGKHYLRYRIIPSCYRVHFPEHLKSHRSHDIVLLCVDCHEVAHAAAERYKKQIATEFGIPLFVRRVLDSKEAQGTSSLVEDESTGDSEDAGVSPLHLRSAAMALLRHGNRMPSSRREELLQTVKMYYGGRDLSEEDLEKALLIGLSPHERRKLERKKGVSFKHSAEVAGMDKQEDENNDGEALADFEKIMTVERSTVVDDSGDGTSEGDGAKELNDTQCNGNTLHQQNSKLSLLGHGPHGKQIVEYLLREHGEDGVRDFCQRWRKVFVDAVHPRHLPGGWNVSHSGRRDFGEFSVYNPTKRLSTE</sequence>
<keyword id="KW-0025">Alternative splicing</keyword>
<keyword id="KW-0963">Cytoplasm</keyword>
<keyword id="KW-1185">Reference proteome</keyword>
<reference key="1">
    <citation type="journal article" date="2008" name="Mol. Cell. Biol.">
        <title>Degradation of a polyadenylated rRNA maturation by-product involves one of the three RRP6-like proteins in Arabidopsis thaliana.</title>
        <authorList>
            <person name="Lange H."/>
            <person name="Holec S."/>
            <person name="Cognat V."/>
            <person name="Pieuchot L."/>
            <person name="Le Ret M."/>
            <person name="Canaday J."/>
            <person name="Gagliardi D."/>
        </authorList>
    </citation>
    <scope>NUCLEOTIDE SEQUENCE [MRNA] (ISOFORM 1)</scope>
    <scope>SUBCELLULAR LOCATION</scope>
    <source>
        <strain>cv. Columbia</strain>
    </source>
</reference>
<reference key="2">
    <citation type="journal article" date="1999" name="Nature">
        <title>Sequence and analysis of chromosome 2 of the plant Arabidopsis thaliana.</title>
        <authorList>
            <person name="Lin X."/>
            <person name="Kaul S."/>
            <person name="Rounsley S.D."/>
            <person name="Shea T.P."/>
            <person name="Benito M.-I."/>
            <person name="Town C.D."/>
            <person name="Fujii C.Y."/>
            <person name="Mason T.M."/>
            <person name="Bowman C.L."/>
            <person name="Barnstead M.E."/>
            <person name="Feldblyum T.V."/>
            <person name="Buell C.R."/>
            <person name="Ketchum K.A."/>
            <person name="Lee J.J."/>
            <person name="Ronning C.M."/>
            <person name="Koo H.L."/>
            <person name="Moffat K.S."/>
            <person name="Cronin L.A."/>
            <person name="Shen M."/>
            <person name="Pai G."/>
            <person name="Van Aken S."/>
            <person name="Umayam L."/>
            <person name="Tallon L.J."/>
            <person name="Gill J.E."/>
            <person name="Adams M.D."/>
            <person name="Carrera A.J."/>
            <person name="Creasy T.H."/>
            <person name="Goodman H.M."/>
            <person name="Somerville C.R."/>
            <person name="Copenhaver G.P."/>
            <person name="Preuss D."/>
            <person name="Nierman W.C."/>
            <person name="White O."/>
            <person name="Eisen J.A."/>
            <person name="Salzberg S.L."/>
            <person name="Fraser C.M."/>
            <person name="Venter J.C."/>
        </authorList>
    </citation>
    <scope>NUCLEOTIDE SEQUENCE [LARGE SCALE GENOMIC DNA] (ISOFORM 2)</scope>
    <source>
        <strain>cv. Columbia</strain>
    </source>
</reference>
<reference key="3">
    <citation type="journal article" date="2017" name="Plant J.">
        <title>Araport11: a complete reannotation of the Arabidopsis thaliana reference genome.</title>
        <authorList>
            <person name="Cheng C.Y."/>
            <person name="Krishnakumar V."/>
            <person name="Chan A.P."/>
            <person name="Thibaud-Nissen F."/>
            <person name="Schobel S."/>
            <person name="Town C.D."/>
        </authorList>
    </citation>
    <scope>GENOME REANNOTATION</scope>
    <source>
        <strain>cv. Columbia</strain>
    </source>
</reference>
<accession>A9LLI8</accession>
<accession>F4ITQ6</accession>
<accession>Q9ZV70</accession>
<dbReference type="EMBL" id="EU240664">
    <property type="protein sequence ID" value="ABX52081.1"/>
    <property type="molecule type" value="mRNA"/>
</dbReference>
<dbReference type="EMBL" id="AC005700">
    <property type="protein sequence ID" value="AAC69936.1"/>
    <property type="status" value="ALT_SEQ"/>
    <property type="molecule type" value="Genomic_DNA"/>
</dbReference>
<dbReference type="EMBL" id="CP002685">
    <property type="protein sequence ID" value="AEC08682.1"/>
    <property type="molecule type" value="Genomic_DNA"/>
</dbReference>
<dbReference type="EMBL" id="CP002685">
    <property type="protein sequence ID" value="ANM61513.1"/>
    <property type="molecule type" value="Genomic_DNA"/>
</dbReference>
<dbReference type="PIR" id="H84732">
    <property type="entry name" value="H84732"/>
</dbReference>
<dbReference type="RefSeq" id="NP_001323729.1">
    <molecule id="A9LLI8-1"/>
    <property type="nucleotide sequence ID" value="NM_001336395.1"/>
</dbReference>
<dbReference type="RefSeq" id="NP_850189.5">
    <molecule id="A9LLI8-2"/>
    <property type="nucleotide sequence ID" value="NM_179858.5"/>
</dbReference>
<dbReference type="SMR" id="A9LLI8"/>
<dbReference type="FunCoup" id="A9LLI8">
    <property type="interactions" value="441"/>
</dbReference>
<dbReference type="STRING" id="3702.A9LLI8"/>
<dbReference type="iPTMnet" id="A9LLI8"/>
<dbReference type="PaxDb" id="3702-AT2G32415.1"/>
<dbReference type="ProteomicsDB" id="228220">
    <molecule id="A9LLI8-1"/>
</dbReference>
<dbReference type="EnsemblPlants" id="AT2G32415.1">
    <molecule id="A9LLI8-2"/>
    <property type="protein sequence ID" value="AT2G32415.1"/>
    <property type="gene ID" value="AT2G32415"/>
</dbReference>
<dbReference type="EnsemblPlants" id="AT2G32415.3">
    <molecule id="A9LLI8-1"/>
    <property type="protein sequence ID" value="AT2G32415.3"/>
    <property type="gene ID" value="AT2G32415"/>
</dbReference>
<dbReference type="GeneID" id="817803"/>
<dbReference type="Gramene" id="AT2G32415.1">
    <molecule id="A9LLI8-2"/>
    <property type="protein sequence ID" value="AT2G32415.1"/>
    <property type="gene ID" value="AT2G32415"/>
</dbReference>
<dbReference type="Gramene" id="AT2G32415.3">
    <molecule id="A9LLI8-1"/>
    <property type="protein sequence ID" value="AT2G32415.3"/>
    <property type="gene ID" value="AT2G32415"/>
</dbReference>
<dbReference type="KEGG" id="ath:AT2G32415"/>
<dbReference type="Araport" id="AT2G32415"/>
<dbReference type="TAIR" id="AT2G32415">
    <property type="gene designation" value="RRP6L3"/>
</dbReference>
<dbReference type="eggNOG" id="KOG2206">
    <property type="taxonomic scope" value="Eukaryota"/>
</dbReference>
<dbReference type="eggNOG" id="KOG4373">
    <property type="taxonomic scope" value="Eukaryota"/>
</dbReference>
<dbReference type="InParanoid" id="A9LLI8"/>
<dbReference type="OMA" id="HNCRIFA"/>
<dbReference type="OrthoDB" id="2250022at2759"/>
<dbReference type="PhylomeDB" id="A9LLI8"/>
<dbReference type="PRO" id="PR:A9LLI8"/>
<dbReference type="Proteomes" id="UP000006548">
    <property type="component" value="Chromosome 2"/>
</dbReference>
<dbReference type="ExpressionAtlas" id="A9LLI8">
    <property type="expression patterns" value="baseline and differential"/>
</dbReference>
<dbReference type="GO" id="GO:0005737">
    <property type="term" value="C:cytoplasm"/>
    <property type="evidence" value="ECO:0000314"/>
    <property type="project" value="TAIR"/>
</dbReference>
<dbReference type="GO" id="GO:0005829">
    <property type="term" value="C:cytosol"/>
    <property type="evidence" value="ECO:0007669"/>
    <property type="project" value="UniProtKB-SubCell"/>
</dbReference>
<dbReference type="GO" id="GO:0000175">
    <property type="term" value="F:3'-5'-RNA exonuclease activity"/>
    <property type="evidence" value="ECO:0007669"/>
    <property type="project" value="InterPro"/>
</dbReference>
<dbReference type="GO" id="GO:0003676">
    <property type="term" value="F:nucleic acid binding"/>
    <property type="evidence" value="ECO:0007669"/>
    <property type="project" value="InterPro"/>
</dbReference>
<dbReference type="GO" id="GO:0000166">
    <property type="term" value="F:nucleotide binding"/>
    <property type="evidence" value="ECO:0007669"/>
    <property type="project" value="InterPro"/>
</dbReference>
<dbReference type="GO" id="GO:0000467">
    <property type="term" value="P:exonucleolytic trimming to generate mature 3'-end of 5.8S rRNA from tricistronic rRNA transcript (SSU-rRNA, 5.8S rRNA, LSU-rRNA)"/>
    <property type="evidence" value="ECO:0007669"/>
    <property type="project" value="InterPro"/>
</dbReference>
<dbReference type="CDD" id="cd06147">
    <property type="entry name" value="Rrp6p_like_exo"/>
    <property type="match status" value="1"/>
</dbReference>
<dbReference type="FunFam" id="3.30.420.10:FF:000079">
    <property type="entry name" value="Polynucleotidyl transferase ribonuclease H fold protein with HRDC domain"/>
    <property type="match status" value="1"/>
</dbReference>
<dbReference type="Gene3D" id="1.10.150.80">
    <property type="entry name" value="HRDC domain"/>
    <property type="match status" value="1"/>
</dbReference>
<dbReference type="Gene3D" id="3.30.420.10">
    <property type="entry name" value="Ribonuclease H-like superfamily/Ribonuclease H"/>
    <property type="match status" value="1"/>
</dbReference>
<dbReference type="InterPro" id="IPR002562">
    <property type="entry name" value="3'-5'_exonuclease_dom"/>
</dbReference>
<dbReference type="InterPro" id="IPR010997">
    <property type="entry name" value="HRDC-like_sf"/>
</dbReference>
<dbReference type="InterPro" id="IPR002121">
    <property type="entry name" value="HRDC_dom"/>
</dbReference>
<dbReference type="InterPro" id="IPR044876">
    <property type="entry name" value="HRDC_dom_sf"/>
</dbReference>
<dbReference type="InterPro" id="IPR012337">
    <property type="entry name" value="RNaseH-like_sf"/>
</dbReference>
<dbReference type="InterPro" id="IPR036397">
    <property type="entry name" value="RNaseH_sf"/>
</dbReference>
<dbReference type="InterPro" id="IPR045092">
    <property type="entry name" value="Rrp6-like"/>
</dbReference>
<dbReference type="InterPro" id="IPR049559">
    <property type="entry name" value="Rrp6p-like_exo"/>
</dbReference>
<dbReference type="PANTHER" id="PTHR12124">
    <property type="entry name" value="POLYMYOSITIS/SCLERODERMA AUTOANTIGEN-RELATED"/>
    <property type="match status" value="1"/>
</dbReference>
<dbReference type="PANTHER" id="PTHR12124:SF68">
    <property type="entry name" value="PROTEIN RRP6-LIKE 3"/>
    <property type="match status" value="1"/>
</dbReference>
<dbReference type="Pfam" id="PF01612">
    <property type="entry name" value="DNA_pol_A_exo1"/>
    <property type="match status" value="1"/>
</dbReference>
<dbReference type="Pfam" id="PF00570">
    <property type="entry name" value="HRDC"/>
    <property type="match status" value="1"/>
</dbReference>
<dbReference type="SMART" id="SM00474">
    <property type="entry name" value="35EXOc"/>
    <property type="match status" value="1"/>
</dbReference>
<dbReference type="SUPFAM" id="SSF47819">
    <property type="entry name" value="HRDC-like"/>
    <property type="match status" value="1"/>
</dbReference>
<dbReference type="SUPFAM" id="SSF53098">
    <property type="entry name" value="Ribonuclease H-like"/>
    <property type="match status" value="1"/>
</dbReference>
<comment type="subcellular location">
    <subcellularLocation>
        <location evidence="4">Cytoplasm</location>
        <location evidence="4">Cytosol</location>
    </subcellularLocation>
</comment>
<comment type="alternative products">
    <event type="alternative splicing"/>
    <isoform>
        <id>A9LLI8-1</id>
        <name>1</name>
        <sequence type="displayed"/>
    </isoform>
    <isoform>
        <id>A9LLI8-2</id>
        <name>2</name>
        <sequence type="described" ref="VSP_057830"/>
    </isoform>
</comment>
<comment type="miscellaneous">
    <molecule>Isoform 2</molecule>
    <text evidence="6">May be due to a competing acceptor splice site.</text>
</comment>
<comment type="sequence caution" evidence="6">
    <conflict type="erroneous gene model prediction">
        <sequence resource="EMBL-CDS" id="AAC69936"/>
    </conflict>
</comment>
<evidence type="ECO:0000255" key="1"/>
<evidence type="ECO:0000255" key="2">
    <source>
        <dbReference type="PROSITE-ProRule" id="PRU00328"/>
    </source>
</evidence>
<evidence type="ECO:0000256" key="3">
    <source>
        <dbReference type="SAM" id="MobiDB-lite"/>
    </source>
</evidence>
<evidence type="ECO:0000269" key="4">
    <source>
    </source>
</evidence>
<evidence type="ECO:0000303" key="5">
    <source>
    </source>
</evidence>
<evidence type="ECO:0000305" key="6"/>
<evidence type="ECO:0000312" key="7">
    <source>
        <dbReference type="Araport" id="AT2G32415"/>
    </source>
</evidence>
<gene>
    <name evidence="5" type="primary">RRP6L3</name>
    <name evidence="7" type="ordered locus">At2g32415</name>
</gene>
<proteinExistence type="evidence at transcript level"/>
<feature type="chain" id="PRO_0000433632" description="Protein RRP6-like 3">
    <location>
        <begin position="1"/>
        <end position="892"/>
    </location>
</feature>
<feature type="domain" description="3'-5' exonuclease" evidence="1">
    <location>
        <begin position="119"/>
        <end position="287"/>
    </location>
</feature>
<feature type="domain" description="HRDC" evidence="2">
    <location>
        <begin position="350"/>
        <end position="436"/>
    </location>
</feature>
<feature type="region of interest" description="Disordered" evidence="3">
    <location>
        <begin position="785"/>
        <end position="811"/>
    </location>
</feature>
<feature type="splice variant" id="VSP_057830" description="In isoform 2.">
    <location>
        <position position="292"/>
    </location>
</feature>
<protein>
    <recommendedName>
        <fullName evidence="5">Protein RRP6-like 3</fullName>
        <shortName evidence="5">AtRRP6L3</shortName>
    </recommendedName>
</protein>